<organism>
    <name type="scientific">Klebsiella pneumoniae (strain 342)</name>
    <dbReference type="NCBI Taxonomy" id="507522"/>
    <lineage>
        <taxon>Bacteria</taxon>
        <taxon>Pseudomonadati</taxon>
        <taxon>Pseudomonadota</taxon>
        <taxon>Gammaproteobacteria</taxon>
        <taxon>Enterobacterales</taxon>
        <taxon>Enterobacteriaceae</taxon>
        <taxon>Klebsiella/Raoultella group</taxon>
        <taxon>Klebsiella</taxon>
        <taxon>Klebsiella pneumoniae complex</taxon>
    </lineage>
</organism>
<reference key="1">
    <citation type="journal article" date="2008" name="PLoS Genet.">
        <title>Complete genome sequence of the N2-fixing broad host range endophyte Klebsiella pneumoniae 342 and virulence predictions verified in mice.</title>
        <authorList>
            <person name="Fouts D.E."/>
            <person name="Tyler H.L."/>
            <person name="DeBoy R.T."/>
            <person name="Daugherty S."/>
            <person name="Ren Q."/>
            <person name="Badger J.H."/>
            <person name="Durkin A.S."/>
            <person name="Huot H."/>
            <person name="Shrivastava S."/>
            <person name="Kothari S."/>
            <person name="Dodson R.J."/>
            <person name="Mohamoud Y."/>
            <person name="Khouri H."/>
            <person name="Roesch L.F.W."/>
            <person name="Krogfelt K.A."/>
            <person name="Struve C."/>
            <person name="Triplett E.W."/>
            <person name="Methe B.A."/>
        </authorList>
    </citation>
    <scope>NUCLEOTIDE SEQUENCE [LARGE SCALE GENOMIC DNA]</scope>
    <source>
        <strain>342</strain>
    </source>
</reference>
<proteinExistence type="inferred from homology"/>
<evidence type="ECO:0000255" key="1">
    <source>
        <dbReference type="HAMAP-Rule" id="MF_01177"/>
    </source>
</evidence>
<accession>B5Y324</accession>
<feature type="chain" id="PRO_1000138124" description="HTH-type transcriptional repressor NsrR">
    <location>
        <begin position="1"/>
        <end position="141"/>
    </location>
</feature>
<feature type="domain" description="HTH rrf2-type" evidence="1">
    <location>
        <begin position="2"/>
        <end position="129"/>
    </location>
</feature>
<feature type="DNA-binding region" description="H-T-H motif" evidence="1">
    <location>
        <begin position="28"/>
        <end position="51"/>
    </location>
</feature>
<feature type="binding site" evidence="1">
    <location>
        <position position="91"/>
    </location>
    <ligand>
        <name>[2Fe-2S] cluster</name>
        <dbReference type="ChEBI" id="CHEBI:190135"/>
    </ligand>
</feature>
<feature type="binding site" evidence="1">
    <location>
        <position position="96"/>
    </location>
    <ligand>
        <name>[2Fe-2S] cluster</name>
        <dbReference type="ChEBI" id="CHEBI:190135"/>
    </ligand>
</feature>
<feature type="binding site" evidence="1">
    <location>
        <position position="102"/>
    </location>
    <ligand>
        <name>[2Fe-2S] cluster</name>
        <dbReference type="ChEBI" id="CHEBI:190135"/>
    </ligand>
</feature>
<gene>
    <name evidence="1" type="primary">nsrR</name>
    <name type="ordered locus">KPK_5090</name>
</gene>
<sequence>MQLTSFTDYGLRALIYMASLPEGRMTSISEVTEVYGVSRNHMVKIINQLSRMGYVTAVRGKNGGIRLGKPAGQIRVGDVVRDLEPLSLVNCSSEFCHITPACRLKQALAEAAQSFLKELDNYTLADLVEKNQPLYKLLLVE</sequence>
<comment type="function">
    <text evidence="1">Nitric oxide-sensitive repressor of genes involved in protecting the cell against nitrosative stress. May require iron for activity.</text>
</comment>
<comment type="cofactor">
    <cofactor evidence="1">
        <name>[2Fe-2S] cluster</name>
        <dbReference type="ChEBI" id="CHEBI:190135"/>
    </cofactor>
    <text evidence="1">Binds 1 [2Fe-2S] cluster per subunit.</text>
</comment>
<keyword id="KW-0001">2Fe-2S</keyword>
<keyword id="KW-0238">DNA-binding</keyword>
<keyword id="KW-0408">Iron</keyword>
<keyword id="KW-0411">Iron-sulfur</keyword>
<keyword id="KW-0479">Metal-binding</keyword>
<keyword id="KW-0678">Repressor</keyword>
<keyword id="KW-0804">Transcription</keyword>
<keyword id="KW-0805">Transcription regulation</keyword>
<protein>
    <recommendedName>
        <fullName evidence="1">HTH-type transcriptional repressor NsrR</fullName>
    </recommendedName>
</protein>
<name>NSRR_KLEP3</name>
<dbReference type="EMBL" id="CP000964">
    <property type="protein sequence ID" value="ACI11677.1"/>
    <property type="molecule type" value="Genomic_DNA"/>
</dbReference>
<dbReference type="SMR" id="B5Y324"/>
<dbReference type="KEGG" id="kpe:KPK_5090"/>
<dbReference type="HOGENOM" id="CLU_107144_2_1_6"/>
<dbReference type="Proteomes" id="UP000001734">
    <property type="component" value="Chromosome"/>
</dbReference>
<dbReference type="GO" id="GO:0005829">
    <property type="term" value="C:cytosol"/>
    <property type="evidence" value="ECO:0007669"/>
    <property type="project" value="TreeGrafter"/>
</dbReference>
<dbReference type="GO" id="GO:0051537">
    <property type="term" value="F:2 iron, 2 sulfur cluster binding"/>
    <property type="evidence" value="ECO:0007669"/>
    <property type="project" value="UniProtKB-KW"/>
</dbReference>
<dbReference type="GO" id="GO:0003700">
    <property type="term" value="F:DNA-binding transcription factor activity"/>
    <property type="evidence" value="ECO:0007669"/>
    <property type="project" value="UniProtKB-UniRule"/>
</dbReference>
<dbReference type="GO" id="GO:0003690">
    <property type="term" value="F:double-stranded DNA binding"/>
    <property type="evidence" value="ECO:0007669"/>
    <property type="project" value="UniProtKB-UniRule"/>
</dbReference>
<dbReference type="GO" id="GO:0005506">
    <property type="term" value="F:iron ion binding"/>
    <property type="evidence" value="ECO:0007669"/>
    <property type="project" value="UniProtKB-UniRule"/>
</dbReference>
<dbReference type="GO" id="GO:0045892">
    <property type="term" value="P:negative regulation of DNA-templated transcription"/>
    <property type="evidence" value="ECO:0007669"/>
    <property type="project" value="InterPro"/>
</dbReference>
<dbReference type="FunFam" id="1.10.10.10:FF:000105">
    <property type="entry name" value="HTH-type transcriptional repressor NsrR"/>
    <property type="match status" value="1"/>
</dbReference>
<dbReference type="Gene3D" id="1.10.10.10">
    <property type="entry name" value="Winged helix-like DNA-binding domain superfamily/Winged helix DNA-binding domain"/>
    <property type="match status" value="1"/>
</dbReference>
<dbReference type="HAMAP" id="MF_01177">
    <property type="entry name" value="HTH_type_NsrR"/>
    <property type="match status" value="1"/>
</dbReference>
<dbReference type="InterPro" id="IPR030489">
    <property type="entry name" value="TR_Rrf2-type_CS"/>
</dbReference>
<dbReference type="InterPro" id="IPR000944">
    <property type="entry name" value="Tscrpt_reg_Rrf2"/>
</dbReference>
<dbReference type="InterPro" id="IPR023761">
    <property type="entry name" value="Tscrpt_rep_HTH_NsrR"/>
</dbReference>
<dbReference type="InterPro" id="IPR036388">
    <property type="entry name" value="WH-like_DNA-bd_sf"/>
</dbReference>
<dbReference type="InterPro" id="IPR036390">
    <property type="entry name" value="WH_DNA-bd_sf"/>
</dbReference>
<dbReference type="NCBIfam" id="NF008240">
    <property type="entry name" value="PRK11014.1"/>
    <property type="match status" value="1"/>
</dbReference>
<dbReference type="NCBIfam" id="TIGR00738">
    <property type="entry name" value="rrf2_super"/>
    <property type="match status" value="1"/>
</dbReference>
<dbReference type="PANTHER" id="PTHR33221:SF4">
    <property type="entry name" value="HTH-TYPE TRANSCRIPTIONAL REPRESSOR NSRR"/>
    <property type="match status" value="1"/>
</dbReference>
<dbReference type="PANTHER" id="PTHR33221">
    <property type="entry name" value="WINGED HELIX-TURN-HELIX TRANSCRIPTIONAL REGULATOR, RRF2 FAMILY"/>
    <property type="match status" value="1"/>
</dbReference>
<dbReference type="Pfam" id="PF02082">
    <property type="entry name" value="Rrf2"/>
    <property type="match status" value="1"/>
</dbReference>
<dbReference type="SUPFAM" id="SSF46785">
    <property type="entry name" value="Winged helix' DNA-binding domain"/>
    <property type="match status" value="1"/>
</dbReference>
<dbReference type="PROSITE" id="PS01332">
    <property type="entry name" value="HTH_RRF2_1"/>
    <property type="match status" value="1"/>
</dbReference>
<dbReference type="PROSITE" id="PS51197">
    <property type="entry name" value="HTH_RRF2_2"/>
    <property type="match status" value="1"/>
</dbReference>